<protein>
    <recommendedName>
        <fullName evidence="1">Asparagine--tRNA ligase</fullName>
        <ecNumber evidence="1">6.1.1.22</ecNumber>
    </recommendedName>
    <alternativeName>
        <fullName evidence="1">Asparaginyl-tRNA synthetase</fullName>
        <shortName evidence="1">AsnRS</shortName>
    </alternativeName>
</protein>
<comment type="catalytic activity">
    <reaction evidence="1">
        <text>tRNA(Asn) + L-asparagine + ATP = L-asparaginyl-tRNA(Asn) + AMP + diphosphate + H(+)</text>
        <dbReference type="Rhea" id="RHEA:11180"/>
        <dbReference type="Rhea" id="RHEA-COMP:9659"/>
        <dbReference type="Rhea" id="RHEA-COMP:9674"/>
        <dbReference type="ChEBI" id="CHEBI:15378"/>
        <dbReference type="ChEBI" id="CHEBI:30616"/>
        <dbReference type="ChEBI" id="CHEBI:33019"/>
        <dbReference type="ChEBI" id="CHEBI:58048"/>
        <dbReference type="ChEBI" id="CHEBI:78442"/>
        <dbReference type="ChEBI" id="CHEBI:78515"/>
        <dbReference type="ChEBI" id="CHEBI:456215"/>
        <dbReference type="EC" id="6.1.1.22"/>
    </reaction>
</comment>
<comment type="subunit">
    <text evidence="1">Homodimer.</text>
</comment>
<comment type="subcellular location">
    <subcellularLocation>
        <location evidence="1">Cytoplasm</location>
    </subcellularLocation>
</comment>
<comment type="similarity">
    <text evidence="1">Belongs to the class-II aminoacyl-tRNA synthetase family.</text>
</comment>
<gene>
    <name evidence="1" type="primary">asnS</name>
    <name type="ordered locus">Rcas_0885</name>
</gene>
<organism>
    <name type="scientific">Roseiflexus castenholzii (strain DSM 13941 / HLO8)</name>
    <dbReference type="NCBI Taxonomy" id="383372"/>
    <lineage>
        <taxon>Bacteria</taxon>
        <taxon>Bacillati</taxon>
        <taxon>Chloroflexota</taxon>
        <taxon>Chloroflexia</taxon>
        <taxon>Chloroflexales</taxon>
        <taxon>Roseiflexineae</taxon>
        <taxon>Roseiflexaceae</taxon>
        <taxon>Roseiflexus</taxon>
    </lineage>
</organism>
<keyword id="KW-0030">Aminoacyl-tRNA synthetase</keyword>
<keyword id="KW-0067">ATP-binding</keyword>
<keyword id="KW-0963">Cytoplasm</keyword>
<keyword id="KW-0436">Ligase</keyword>
<keyword id="KW-0547">Nucleotide-binding</keyword>
<keyword id="KW-0648">Protein biosynthesis</keyword>
<keyword id="KW-1185">Reference proteome</keyword>
<dbReference type="EC" id="6.1.1.22" evidence="1"/>
<dbReference type="EMBL" id="CP000804">
    <property type="protein sequence ID" value="ABU57001.1"/>
    <property type="molecule type" value="Genomic_DNA"/>
</dbReference>
<dbReference type="RefSeq" id="WP_012119431.1">
    <property type="nucleotide sequence ID" value="NC_009767.1"/>
</dbReference>
<dbReference type="SMR" id="A7NHQ4"/>
<dbReference type="STRING" id="383372.Rcas_0885"/>
<dbReference type="KEGG" id="rca:Rcas_0885"/>
<dbReference type="eggNOG" id="COG0017">
    <property type="taxonomic scope" value="Bacteria"/>
</dbReference>
<dbReference type="HOGENOM" id="CLU_004553_2_0_0"/>
<dbReference type="OrthoDB" id="9762036at2"/>
<dbReference type="Proteomes" id="UP000000263">
    <property type="component" value="Chromosome"/>
</dbReference>
<dbReference type="GO" id="GO:0005737">
    <property type="term" value="C:cytoplasm"/>
    <property type="evidence" value="ECO:0007669"/>
    <property type="project" value="UniProtKB-SubCell"/>
</dbReference>
<dbReference type="GO" id="GO:0004816">
    <property type="term" value="F:asparagine-tRNA ligase activity"/>
    <property type="evidence" value="ECO:0007669"/>
    <property type="project" value="UniProtKB-UniRule"/>
</dbReference>
<dbReference type="GO" id="GO:0005524">
    <property type="term" value="F:ATP binding"/>
    <property type="evidence" value="ECO:0007669"/>
    <property type="project" value="UniProtKB-UniRule"/>
</dbReference>
<dbReference type="GO" id="GO:0003676">
    <property type="term" value="F:nucleic acid binding"/>
    <property type="evidence" value="ECO:0007669"/>
    <property type="project" value="InterPro"/>
</dbReference>
<dbReference type="GO" id="GO:0006421">
    <property type="term" value="P:asparaginyl-tRNA aminoacylation"/>
    <property type="evidence" value="ECO:0007669"/>
    <property type="project" value="UniProtKB-UniRule"/>
</dbReference>
<dbReference type="CDD" id="cd00776">
    <property type="entry name" value="AsxRS_core"/>
    <property type="match status" value="1"/>
</dbReference>
<dbReference type="Gene3D" id="3.30.930.10">
    <property type="entry name" value="Bira Bifunctional Protein, Domain 2"/>
    <property type="match status" value="1"/>
</dbReference>
<dbReference type="Gene3D" id="2.40.50.140">
    <property type="entry name" value="Nucleic acid-binding proteins"/>
    <property type="match status" value="1"/>
</dbReference>
<dbReference type="HAMAP" id="MF_00534">
    <property type="entry name" value="Asn_tRNA_synth"/>
    <property type="match status" value="1"/>
</dbReference>
<dbReference type="InterPro" id="IPR004364">
    <property type="entry name" value="Aa-tRNA-synt_II"/>
</dbReference>
<dbReference type="InterPro" id="IPR006195">
    <property type="entry name" value="aa-tRNA-synth_II"/>
</dbReference>
<dbReference type="InterPro" id="IPR045864">
    <property type="entry name" value="aa-tRNA-synth_II/BPL/LPL"/>
</dbReference>
<dbReference type="InterPro" id="IPR004522">
    <property type="entry name" value="Asn-tRNA-ligase"/>
</dbReference>
<dbReference type="InterPro" id="IPR002312">
    <property type="entry name" value="Asp/Asn-tRNA-synth_IIb"/>
</dbReference>
<dbReference type="InterPro" id="IPR012340">
    <property type="entry name" value="NA-bd_OB-fold"/>
</dbReference>
<dbReference type="InterPro" id="IPR004365">
    <property type="entry name" value="NA-bd_OB_tRNA"/>
</dbReference>
<dbReference type="NCBIfam" id="TIGR00457">
    <property type="entry name" value="asnS"/>
    <property type="match status" value="1"/>
</dbReference>
<dbReference type="NCBIfam" id="NF003037">
    <property type="entry name" value="PRK03932.1"/>
    <property type="match status" value="1"/>
</dbReference>
<dbReference type="PANTHER" id="PTHR22594:SF34">
    <property type="entry name" value="ASPARAGINE--TRNA LIGASE, MITOCHONDRIAL-RELATED"/>
    <property type="match status" value="1"/>
</dbReference>
<dbReference type="PANTHER" id="PTHR22594">
    <property type="entry name" value="ASPARTYL/LYSYL-TRNA SYNTHETASE"/>
    <property type="match status" value="1"/>
</dbReference>
<dbReference type="Pfam" id="PF00152">
    <property type="entry name" value="tRNA-synt_2"/>
    <property type="match status" value="1"/>
</dbReference>
<dbReference type="Pfam" id="PF01336">
    <property type="entry name" value="tRNA_anti-codon"/>
    <property type="match status" value="1"/>
</dbReference>
<dbReference type="PRINTS" id="PR01042">
    <property type="entry name" value="TRNASYNTHASP"/>
</dbReference>
<dbReference type="SUPFAM" id="SSF55681">
    <property type="entry name" value="Class II aaRS and biotin synthetases"/>
    <property type="match status" value="1"/>
</dbReference>
<dbReference type="SUPFAM" id="SSF50249">
    <property type="entry name" value="Nucleic acid-binding proteins"/>
    <property type="match status" value="1"/>
</dbReference>
<dbReference type="PROSITE" id="PS50862">
    <property type="entry name" value="AA_TRNA_LIGASE_II"/>
    <property type="match status" value="1"/>
</dbReference>
<evidence type="ECO:0000255" key="1">
    <source>
        <dbReference type="HAMAP-Rule" id="MF_00534"/>
    </source>
</evidence>
<proteinExistence type="inferred from homology"/>
<accession>A7NHQ4</accession>
<reference key="1">
    <citation type="submission" date="2007-08" db="EMBL/GenBank/DDBJ databases">
        <title>Complete sequence of Roseiflexus castenholzii DSM 13941.</title>
        <authorList>
            <consortium name="US DOE Joint Genome Institute"/>
            <person name="Copeland A."/>
            <person name="Lucas S."/>
            <person name="Lapidus A."/>
            <person name="Barry K."/>
            <person name="Glavina del Rio T."/>
            <person name="Dalin E."/>
            <person name="Tice H."/>
            <person name="Pitluck S."/>
            <person name="Thompson L.S."/>
            <person name="Brettin T."/>
            <person name="Bruce D."/>
            <person name="Detter J.C."/>
            <person name="Han C."/>
            <person name="Tapia R."/>
            <person name="Schmutz J."/>
            <person name="Larimer F."/>
            <person name="Land M."/>
            <person name="Hauser L."/>
            <person name="Kyrpides N."/>
            <person name="Mikhailova N."/>
            <person name="Bryant D.A."/>
            <person name="Hanada S."/>
            <person name="Tsukatani Y."/>
            <person name="Richardson P."/>
        </authorList>
    </citation>
    <scope>NUCLEOTIDE SEQUENCE [LARGE SCALE GENOMIC DNA]</scope>
    <source>
        <strain>DSM 13941 / HLO8</strain>
    </source>
</reference>
<sequence>MSLLPTATISDIARHNGRVVTLAGWVAHKTEKGKLVFIRLRDGSGVMQCVVFRKNVAEETFIAAQRLTLESSCRITGTVRADERAPGGFELDVNGIEIIQIAPEYPIQPKEHGVEFLMEHRHLWVRSSKQHALLRIRAEIIAAAQEWLNAQGFVRFDTPILTPCAAEGTTNLFATPYFDLGTAYLGQTGQLYVEAGMMSFGKVYCFGPTFRAEKSKTRRHLTEFWMIEPEVAFALHDDNLALQEQFVSAIVQRVLERRADDLATLERDTKPLERCVPPFPRITYDEALRLIAERYAEVEGCTPLEWGEDLGAPHETLIASMFDRPVFVERFPSAIKAFYMEPDPNRPEVALCADLLAPEGYGEIIGGSQRIHDAALLERRIREYGLNVDDYRWYIDLRRYGSVPHSGFGMGIERATAWIGGTHHIRETIPFPRMLYRMYP</sequence>
<feature type="chain" id="PRO_1000081853" description="Asparagine--tRNA ligase">
    <location>
        <begin position="1"/>
        <end position="440"/>
    </location>
</feature>
<name>SYN_ROSCS</name>